<organism>
    <name type="scientific">Caenorhabditis elegans</name>
    <dbReference type="NCBI Taxonomy" id="6239"/>
    <lineage>
        <taxon>Eukaryota</taxon>
        <taxon>Metazoa</taxon>
        <taxon>Ecdysozoa</taxon>
        <taxon>Nematoda</taxon>
        <taxon>Chromadorea</taxon>
        <taxon>Rhabditida</taxon>
        <taxon>Rhabditina</taxon>
        <taxon>Rhabditomorpha</taxon>
        <taxon>Rhabditoidea</taxon>
        <taxon>Rhabditidae</taxon>
        <taxon>Peloderinae</taxon>
        <taxon>Caenorhabditis</taxon>
    </lineage>
</organism>
<protein>
    <recommendedName>
        <fullName>Ribosome biogenesis protein BRX1 homolog</fullName>
    </recommendedName>
    <alternativeName>
        <fullName>Brix domain-containing protein 2 homolog</fullName>
    </alternativeName>
</protein>
<sequence length="352" mass="40234">MGKFSKIKKVQEEESAHQKMEWEAAGAKDSSSDDSSDESDNDDQPKQATEETRKRAELWTNRERVLVLCSRGADVRTRYLMKDIKDLLPHAKGDSKLDQQKSLNVLNEIAEMKNCTKVMYFESRKRKDTYLWMSNVEKGPSIKFLVHNVHTMKELKMSGNCLRASRPVLSFDDAFDKKPQLKLIKAVLMQTLGTPHHHPRSQPFVDHVFNFSVGEGDKIWFRNFQIVDESLQLQEVGPRFVLEMVRLFAGSFEGAVLYDNPNYVSPNVIRREHRKGQHSYIEKQLAVKASNIKQAKVTEILAEKTVDLVGKEFDTQNNAAADSEAAAQITAQIEKRRVRKKKSQASKYTGSD</sequence>
<gene>
    <name type="ORF">K12H4.3</name>
</gene>
<evidence type="ECO:0000250" key="1"/>
<evidence type="ECO:0000255" key="2">
    <source>
        <dbReference type="PROSITE-ProRule" id="PRU00034"/>
    </source>
</evidence>
<evidence type="ECO:0000256" key="3">
    <source>
        <dbReference type="SAM" id="MobiDB-lite"/>
    </source>
</evidence>
<evidence type="ECO:0000305" key="4"/>
<proteinExistence type="inferred from homology"/>
<accession>P34524</accession>
<comment type="function">
    <text evidence="1">Required for biogenesis of the 60S ribosomal subunit.</text>
</comment>
<comment type="subcellular location">
    <subcellularLocation>
        <location evidence="1">Nucleus</location>
        <location evidence="1">Nucleolus</location>
    </subcellularLocation>
</comment>
<comment type="similarity">
    <text evidence="4">Belongs to the BRX1 family.</text>
</comment>
<feature type="chain" id="PRO_0000120264" description="Ribosome biogenesis protein BRX1 homolog">
    <location>
        <begin position="1"/>
        <end position="352"/>
    </location>
</feature>
<feature type="domain" description="Brix" evidence="2">
    <location>
        <begin position="63"/>
        <end position="253"/>
    </location>
</feature>
<feature type="region of interest" description="Disordered" evidence="3">
    <location>
        <begin position="1"/>
        <end position="55"/>
    </location>
</feature>
<feature type="compositionally biased region" description="Basic and acidic residues" evidence="3">
    <location>
        <begin position="9"/>
        <end position="22"/>
    </location>
</feature>
<feature type="compositionally biased region" description="Acidic residues" evidence="3">
    <location>
        <begin position="32"/>
        <end position="42"/>
    </location>
</feature>
<feature type="compositionally biased region" description="Basic and acidic residues" evidence="3">
    <location>
        <begin position="43"/>
        <end position="55"/>
    </location>
</feature>
<dbReference type="EMBL" id="FO081380">
    <property type="protein sequence ID" value="CCD71195.1"/>
    <property type="molecule type" value="Genomic_DNA"/>
</dbReference>
<dbReference type="PIR" id="S44853">
    <property type="entry name" value="S44853"/>
</dbReference>
<dbReference type="RefSeq" id="NP_498756.1">
    <property type="nucleotide sequence ID" value="NM_066355.9"/>
</dbReference>
<dbReference type="SMR" id="P34524"/>
<dbReference type="BioGRID" id="41340">
    <property type="interactions" value="6"/>
</dbReference>
<dbReference type="DIP" id="DIP-27441N"/>
<dbReference type="FunCoup" id="P34524">
    <property type="interactions" value="2564"/>
</dbReference>
<dbReference type="STRING" id="6239.K12H4.3.1"/>
<dbReference type="PaxDb" id="6239-K12H4.3"/>
<dbReference type="PeptideAtlas" id="P34524"/>
<dbReference type="EnsemblMetazoa" id="K12H4.3.1">
    <property type="protein sequence ID" value="K12H4.3.1"/>
    <property type="gene ID" value="WBGene00019678"/>
</dbReference>
<dbReference type="GeneID" id="176134"/>
<dbReference type="KEGG" id="cel:CELE_K12H4.3"/>
<dbReference type="UCSC" id="K12H4.3">
    <property type="organism name" value="c. elegans"/>
</dbReference>
<dbReference type="AGR" id="WB:WBGene00019678"/>
<dbReference type="CTD" id="176134"/>
<dbReference type="WormBase" id="K12H4.3">
    <property type="protein sequence ID" value="CE00268"/>
    <property type="gene ID" value="WBGene00019678"/>
</dbReference>
<dbReference type="eggNOG" id="KOG2971">
    <property type="taxonomic scope" value="Eukaryota"/>
</dbReference>
<dbReference type="GeneTree" id="ENSGT00390000014467"/>
<dbReference type="HOGENOM" id="CLU_048373_3_0_1"/>
<dbReference type="InParanoid" id="P34524"/>
<dbReference type="OMA" id="YRHRHLM"/>
<dbReference type="OrthoDB" id="1638493at2759"/>
<dbReference type="PhylomeDB" id="P34524"/>
<dbReference type="PRO" id="PR:P34524"/>
<dbReference type="Proteomes" id="UP000001940">
    <property type="component" value="Chromosome III"/>
</dbReference>
<dbReference type="Bgee" id="WBGene00019678">
    <property type="expression patterns" value="Expressed in germ line (C elegans) and 4 other cell types or tissues"/>
</dbReference>
<dbReference type="GO" id="GO:0005730">
    <property type="term" value="C:nucleolus"/>
    <property type="evidence" value="ECO:0000318"/>
    <property type="project" value="GO_Central"/>
</dbReference>
<dbReference type="GO" id="GO:0003723">
    <property type="term" value="F:RNA binding"/>
    <property type="evidence" value="ECO:0000318"/>
    <property type="project" value="GO_Central"/>
</dbReference>
<dbReference type="GO" id="GO:0019843">
    <property type="term" value="F:rRNA binding"/>
    <property type="evidence" value="ECO:0007669"/>
    <property type="project" value="InterPro"/>
</dbReference>
<dbReference type="GO" id="GO:0000027">
    <property type="term" value="P:ribosomal large subunit assembly"/>
    <property type="evidence" value="ECO:0000318"/>
    <property type="project" value="GO_Central"/>
</dbReference>
<dbReference type="GO" id="GO:0006364">
    <property type="term" value="P:rRNA processing"/>
    <property type="evidence" value="ECO:0007669"/>
    <property type="project" value="InterPro"/>
</dbReference>
<dbReference type="FunFam" id="3.40.50.10480:FF:000003">
    <property type="entry name" value="Ribosome biogenesis protein BRX1"/>
    <property type="match status" value="1"/>
</dbReference>
<dbReference type="Gene3D" id="3.40.50.10480">
    <property type="entry name" value="Probable brix-domain ribosomal biogenesis protein"/>
    <property type="match status" value="1"/>
</dbReference>
<dbReference type="InterPro" id="IPR007109">
    <property type="entry name" value="Brix"/>
</dbReference>
<dbReference type="InterPro" id="IPR026532">
    <property type="entry name" value="BRX1"/>
</dbReference>
<dbReference type="PANTHER" id="PTHR13634">
    <property type="entry name" value="RIBOSOME BIOGENESIS PROTEIN BRIX"/>
    <property type="match status" value="1"/>
</dbReference>
<dbReference type="PANTHER" id="PTHR13634:SF0">
    <property type="entry name" value="RIBOSOME BIOGENESIS PROTEIN BRX1 HOMOLOG"/>
    <property type="match status" value="1"/>
</dbReference>
<dbReference type="Pfam" id="PF04427">
    <property type="entry name" value="Brix"/>
    <property type="match status" value="1"/>
</dbReference>
<dbReference type="SMART" id="SM00879">
    <property type="entry name" value="Brix"/>
    <property type="match status" value="1"/>
</dbReference>
<dbReference type="SUPFAM" id="SSF52954">
    <property type="entry name" value="Class II aaRS ABD-related"/>
    <property type="match status" value="1"/>
</dbReference>
<dbReference type="PROSITE" id="PS50833">
    <property type="entry name" value="BRIX"/>
    <property type="match status" value="1"/>
</dbReference>
<reference key="1">
    <citation type="journal article" date="1994" name="Nature">
        <title>2.2 Mb of contiguous nucleotide sequence from chromosome III of C. elegans.</title>
        <authorList>
            <person name="Wilson R."/>
            <person name="Ainscough R."/>
            <person name="Anderson K."/>
            <person name="Baynes C."/>
            <person name="Berks M."/>
            <person name="Bonfield J."/>
            <person name="Burton J."/>
            <person name="Connell M."/>
            <person name="Copsey T."/>
            <person name="Cooper J."/>
            <person name="Coulson A."/>
            <person name="Craxton M."/>
            <person name="Dear S."/>
            <person name="Du Z."/>
            <person name="Durbin R."/>
            <person name="Favello A."/>
            <person name="Fraser A."/>
            <person name="Fulton L."/>
            <person name="Gardner A."/>
            <person name="Green P."/>
            <person name="Hawkins T."/>
            <person name="Hillier L."/>
            <person name="Jier M."/>
            <person name="Johnston L."/>
            <person name="Jones M."/>
            <person name="Kershaw J."/>
            <person name="Kirsten J."/>
            <person name="Laisster N."/>
            <person name="Latreille P."/>
            <person name="Lightning J."/>
            <person name="Lloyd C."/>
            <person name="Mortimore B."/>
            <person name="O'Callaghan M."/>
            <person name="Parsons J."/>
            <person name="Percy C."/>
            <person name="Rifken L."/>
            <person name="Roopra A."/>
            <person name="Saunders D."/>
            <person name="Shownkeen R."/>
            <person name="Sims M."/>
            <person name="Smaldon N."/>
            <person name="Smith A."/>
            <person name="Smith M."/>
            <person name="Sonnhammer E."/>
            <person name="Staden R."/>
            <person name="Sulston J."/>
            <person name="Thierry-Mieg J."/>
            <person name="Thomas K."/>
            <person name="Vaudin M."/>
            <person name="Vaughan K."/>
            <person name="Waterston R."/>
            <person name="Watson A."/>
            <person name="Weinstock L."/>
            <person name="Wilkinson-Sproat J."/>
            <person name="Wohldman P."/>
        </authorList>
    </citation>
    <scope>NUCLEOTIDE SEQUENCE [LARGE SCALE GENOMIC DNA]</scope>
    <source>
        <strain>Bristol N2</strain>
    </source>
</reference>
<reference key="2">
    <citation type="journal article" date="1998" name="Science">
        <title>Genome sequence of the nematode C. elegans: a platform for investigating biology.</title>
        <authorList>
            <consortium name="The C. elegans sequencing consortium"/>
        </authorList>
    </citation>
    <scope>NUCLEOTIDE SEQUENCE [LARGE SCALE GENOMIC DNA]</scope>
    <source>
        <strain>Bristol N2</strain>
    </source>
</reference>
<name>BRX1_CAEEL</name>
<keyword id="KW-0539">Nucleus</keyword>
<keyword id="KW-1185">Reference proteome</keyword>
<keyword id="KW-0690">Ribosome biogenesis</keyword>